<evidence type="ECO:0000250" key="1"/>
<evidence type="ECO:0000250" key="2">
    <source>
        <dbReference type="UniProtKB" id="Q13018"/>
    </source>
</evidence>
<evidence type="ECO:0000255" key="3"/>
<evidence type="ECO:0000255" key="4">
    <source>
        <dbReference type="PROSITE-ProRule" id="PRU00040"/>
    </source>
</evidence>
<evidence type="ECO:0000255" key="5">
    <source>
        <dbReference type="PROSITE-ProRule" id="PRU00174"/>
    </source>
</evidence>
<evidence type="ECO:0000255" key="6">
    <source>
        <dbReference type="PROSITE-ProRule" id="PRU00479"/>
    </source>
</evidence>
<evidence type="ECO:0000256" key="7">
    <source>
        <dbReference type="SAM" id="MobiDB-lite"/>
    </source>
</evidence>
<evidence type="ECO:0000269" key="8">
    <source>
    </source>
</evidence>
<evidence type="ECO:0000269" key="9">
    <source>
    </source>
</evidence>
<evidence type="ECO:0000269" key="10">
    <source>
    </source>
</evidence>
<evidence type="ECO:0000269" key="11">
    <source>
    </source>
</evidence>
<evidence type="ECO:0000269" key="12">
    <source>
    </source>
</evidence>
<evidence type="ECO:0000269" key="13">
    <source>
    </source>
</evidence>
<evidence type="ECO:0000269" key="14">
    <source>
    </source>
</evidence>
<evidence type="ECO:0000269" key="15">
    <source>
    </source>
</evidence>
<evidence type="ECO:0000269" key="16">
    <source>
    </source>
</evidence>
<evidence type="ECO:0000269" key="17">
    <source>
    </source>
</evidence>
<evidence type="ECO:0000269" key="18">
    <source>
    </source>
</evidence>
<evidence type="ECO:0000269" key="19">
    <source>
    </source>
</evidence>
<evidence type="ECO:0000269" key="20">
    <source>
    </source>
</evidence>
<evidence type="ECO:0000303" key="21">
    <source>
    </source>
</evidence>
<evidence type="ECO:0000305" key="22"/>
<organism>
    <name type="scientific">Mus musculus</name>
    <name type="common">Mouse</name>
    <dbReference type="NCBI Taxonomy" id="10090"/>
    <lineage>
        <taxon>Eukaryota</taxon>
        <taxon>Metazoa</taxon>
        <taxon>Chordata</taxon>
        <taxon>Craniata</taxon>
        <taxon>Vertebrata</taxon>
        <taxon>Euteleostomi</taxon>
        <taxon>Mammalia</taxon>
        <taxon>Eutheria</taxon>
        <taxon>Euarchontoglires</taxon>
        <taxon>Glires</taxon>
        <taxon>Rodentia</taxon>
        <taxon>Myomorpha</taxon>
        <taxon>Muroidea</taxon>
        <taxon>Muridae</taxon>
        <taxon>Murinae</taxon>
        <taxon>Mus</taxon>
        <taxon>Mus</taxon>
    </lineage>
</organism>
<dbReference type="EMBL" id="D30779">
    <property type="protein sequence ID" value="BAA06443.1"/>
    <property type="molecule type" value="mRNA"/>
</dbReference>
<dbReference type="EMBL" id="BX679662">
    <property type="protein sequence ID" value="CAM22305.1"/>
    <property type="status" value="ALT_INIT"/>
    <property type="molecule type" value="Genomic_DNA"/>
</dbReference>
<dbReference type="EMBL" id="AL928546">
    <property type="protein sequence ID" value="CAM22305.1"/>
    <property type="status" value="JOINED"/>
    <property type="molecule type" value="Genomic_DNA"/>
</dbReference>
<dbReference type="EMBL" id="AL928546">
    <property type="protein sequence ID" value="CAM23630.1"/>
    <property type="status" value="ALT_INIT"/>
    <property type="molecule type" value="Genomic_DNA"/>
</dbReference>
<dbReference type="EMBL" id="BX679662">
    <property type="protein sequence ID" value="CAM23630.1"/>
    <property type="status" value="JOINED"/>
    <property type="molecule type" value="Genomic_DNA"/>
</dbReference>
<dbReference type="EMBL" id="BC048780">
    <property type="protein sequence ID" value="AAH48780.1"/>
    <property type="molecule type" value="mRNA"/>
</dbReference>
<dbReference type="EMBL" id="BC141355">
    <property type="protein sequence ID" value="AAI41356.1"/>
    <property type="molecule type" value="mRNA"/>
</dbReference>
<dbReference type="EMBL" id="BC141356">
    <property type="protein sequence ID" value="AAI41357.1"/>
    <property type="molecule type" value="mRNA"/>
</dbReference>
<dbReference type="CCDS" id="CCDS16059.1">
    <molecule id="Q62028-1"/>
</dbReference>
<dbReference type="PIR" id="S48719">
    <property type="entry name" value="S48719"/>
</dbReference>
<dbReference type="RefSeq" id="NP_032893.1">
    <molecule id="Q62028-1"/>
    <property type="nucleotide sequence ID" value="NM_008867.2"/>
</dbReference>
<dbReference type="SMR" id="Q62028"/>
<dbReference type="BioGRID" id="202218">
    <property type="interactions" value="3"/>
</dbReference>
<dbReference type="FunCoup" id="Q62028">
    <property type="interactions" value="196"/>
</dbReference>
<dbReference type="STRING" id="10090.ENSMUSP00000108144"/>
<dbReference type="GlyCosmos" id="Q62028">
    <property type="glycosylation" value="6 sites, No reported glycans"/>
</dbReference>
<dbReference type="GlyGen" id="Q62028">
    <property type="glycosylation" value="9 sites, 4 N-linked glycans (4 sites)"/>
</dbReference>
<dbReference type="PhosphoSitePlus" id="Q62028"/>
<dbReference type="PaxDb" id="10090-ENSMUSP00000108144"/>
<dbReference type="PeptideAtlas" id="Q62028"/>
<dbReference type="ProteomicsDB" id="289611">
    <molecule id="Q62028-1"/>
</dbReference>
<dbReference type="ProteomicsDB" id="289612">
    <molecule id="Q62028-2"/>
</dbReference>
<dbReference type="Pumba" id="Q62028"/>
<dbReference type="Antibodypedia" id="2544">
    <property type="antibodies" value="242 antibodies from 25 providers"/>
</dbReference>
<dbReference type="DNASU" id="18779"/>
<dbReference type="Ensembl" id="ENSMUST00000112525.5">
    <molecule id="Q62028-1"/>
    <property type="protein sequence ID" value="ENSMUSP00000108144.4"/>
    <property type="gene ID" value="ENSMUSG00000054580.15"/>
</dbReference>
<dbReference type="GeneID" id="18779"/>
<dbReference type="KEGG" id="mmu:18779"/>
<dbReference type="UCSC" id="uc008jug.2">
    <molecule id="Q62028-1"/>
    <property type="organism name" value="mouse"/>
</dbReference>
<dbReference type="UCSC" id="uc008juh.2">
    <molecule id="Q62028-2"/>
    <property type="organism name" value="mouse"/>
</dbReference>
<dbReference type="AGR" id="MGI:102468"/>
<dbReference type="CTD" id="22925"/>
<dbReference type="MGI" id="MGI:102468">
    <property type="gene designation" value="Pla2r1"/>
</dbReference>
<dbReference type="VEuPathDB" id="HostDB:ENSMUSG00000054580"/>
<dbReference type="eggNOG" id="KOG4297">
    <property type="taxonomic scope" value="Eukaryota"/>
</dbReference>
<dbReference type="GeneTree" id="ENSGT01050000244842"/>
<dbReference type="HOGENOM" id="CLU_002069_2_0_1"/>
<dbReference type="InParanoid" id="Q62028"/>
<dbReference type="OMA" id="GGDICEH"/>
<dbReference type="OrthoDB" id="5858677at2759"/>
<dbReference type="PhylomeDB" id="Q62028"/>
<dbReference type="TreeFam" id="TF316663"/>
<dbReference type="Reactome" id="R-MMU-1482788">
    <property type="pathway name" value="Acyl chain remodelling of PC"/>
</dbReference>
<dbReference type="Reactome" id="R-MMU-1482801">
    <property type="pathway name" value="Acyl chain remodelling of PS"/>
</dbReference>
<dbReference type="Reactome" id="R-MMU-1482839">
    <property type="pathway name" value="Acyl chain remodelling of PE"/>
</dbReference>
<dbReference type="Reactome" id="R-MMU-1482922">
    <property type="pathway name" value="Acyl chain remodelling of PI"/>
</dbReference>
<dbReference type="Reactome" id="R-MMU-1482925">
    <property type="pathway name" value="Acyl chain remodelling of PG"/>
</dbReference>
<dbReference type="Reactome" id="R-MMU-1483166">
    <property type="pathway name" value="Synthesis of PA"/>
</dbReference>
<dbReference type="BioGRID-ORCS" id="18779">
    <property type="hits" value="1 hit in 78 CRISPR screens"/>
</dbReference>
<dbReference type="ChiTaRS" id="Pla2r1">
    <property type="organism name" value="mouse"/>
</dbReference>
<dbReference type="PRO" id="PR:Q62028"/>
<dbReference type="Proteomes" id="UP000000589">
    <property type="component" value="Chromosome 2"/>
</dbReference>
<dbReference type="RNAct" id="Q62028">
    <property type="molecule type" value="protein"/>
</dbReference>
<dbReference type="Bgee" id="ENSMUSG00000054580">
    <property type="expression patterns" value="Expressed in retinal neural layer and 179 other cell types or tissues"/>
</dbReference>
<dbReference type="GO" id="GO:0009986">
    <property type="term" value="C:cell surface"/>
    <property type="evidence" value="ECO:0007669"/>
    <property type="project" value="Ensembl"/>
</dbReference>
<dbReference type="GO" id="GO:0005576">
    <property type="term" value="C:extracellular region"/>
    <property type="evidence" value="ECO:0007669"/>
    <property type="project" value="UniProtKB-SubCell"/>
</dbReference>
<dbReference type="GO" id="GO:0005886">
    <property type="term" value="C:plasma membrane"/>
    <property type="evidence" value="ECO:0000250"/>
    <property type="project" value="UniProtKB"/>
</dbReference>
<dbReference type="GO" id="GO:0043235">
    <property type="term" value="C:receptor complex"/>
    <property type="evidence" value="ECO:0000266"/>
    <property type="project" value="MGI"/>
</dbReference>
<dbReference type="GO" id="GO:0030246">
    <property type="term" value="F:carbohydrate binding"/>
    <property type="evidence" value="ECO:0007669"/>
    <property type="project" value="UniProtKB-KW"/>
</dbReference>
<dbReference type="GO" id="GO:0043274">
    <property type="term" value="F:phospholipase binding"/>
    <property type="evidence" value="ECO:0000353"/>
    <property type="project" value="UniProtKB"/>
</dbReference>
<dbReference type="GO" id="GO:0038023">
    <property type="term" value="F:signaling receptor activity"/>
    <property type="evidence" value="ECO:0000250"/>
    <property type="project" value="UniProtKB"/>
</dbReference>
<dbReference type="GO" id="GO:0090403">
    <property type="term" value="P:oxidative stress-induced premature senescence"/>
    <property type="evidence" value="ECO:0000250"/>
    <property type="project" value="UniProtKB"/>
</dbReference>
<dbReference type="GO" id="GO:0090238">
    <property type="term" value="P:positive regulation of arachidonate secretion"/>
    <property type="evidence" value="ECO:0000314"/>
    <property type="project" value="UniProtKB"/>
</dbReference>
<dbReference type="GO" id="GO:0001819">
    <property type="term" value="P:positive regulation of cytokine production"/>
    <property type="evidence" value="ECO:0000250"/>
    <property type="project" value="UniProtKB"/>
</dbReference>
<dbReference type="GO" id="GO:0043517">
    <property type="term" value="P:positive regulation of DNA damage response, signal transduction by p53 class mediator"/>
    <property type="evidence" value="ECO:0000250"/>
    <property type="project" value="UniProtKB"/>
</dbReference>
<dbReference type="GO" id="GO:1904635">
    <property type="term" value="P:positive regulation of podocyte apoptotic process"/>
    <property type="evidence" value="ECO:0007669"/>
    <property type="project" value="Ensembl"/>
</dbReference>
<dbReference type="GO" id="GO:0072593">
    <property type="term" value="P:reactive oxygen species metabolic process"/>
    <property type="evidence" value="ECO:0000250"/>
    <property type="project" value="UniProtKB"/>
</dbReference>
<dbReference type="GO" id="GO:0006898">
    <property type="term" value="P:receptor-mediated endocytosis"/>
    <property type="evidence" value="ECO:0000314"/>
    <property type="project" value="UniProtKB"/>
</dbReference>
<dbReference type="GO" id="GO:0090399">
    <property type="term" value="P:replicative senescence"/>
    <property type="evidence" value="ECO:0000250"/>
    <property type="project" value="UniProtKB"/>
</dbReference>
<dbReference type="CDD" id="cd00037">
    <property type="entry name" value="CLECT"/>
    <property type="match status" value="8"/>
</dbReference>
<dbReference type="CDD" id="cd00062">
    <property type="entry name" value="FN2"/>
    <property type="match status" value="1"/>
</dbReference>
<dbReference type="FunFam" id="2.10.10.10:FF:000001">
    <property type="entry name" value="Fibronectin 1a isoform 1"/>
    <property type="match status" value="1"/>
</dbReference>
<dbReference type="FunFam" id="2.80.10.50:FF:000039">
    <property type="entry name" value="Secretory phospholipase A2 receptor"/>
    <property type="match status" value="1"/>
</dbReference>
<dbReference type="FunFam" id="3.10.100.10:FF:000032">
    <property type="entry name" value="Secretory phospholipase A2 receptor"/>
    <property type="match status" value="1"/>
</dbReference>
<dbReference type="FunFam" id="3.10.100.10:FF:000038">
    <property type="entry name" value="Secretory phospholipase A2 receptor"/>
    <property type="match status" value="1"/>
</dbReference>
<dbReference type="FunFam" id="3.10.100.10:FF:000039">
    <property type="entry name" value="Secretory phospholipase A2 receptor"/>
    <property type="match status" value="1"/>
</dbReference>
<dbReference type="FunFam" id="3.10.100.10:FF:000040">
    <property type="entry name" value="Secretory phospholipase A2 receptor"/>
    <property type="match status" value="1"/>
</dbReference>
<dbReference type="FunFam" id="3.10.100.10:FF:000046">
    <property type="entry name" value="Secretory phospholipase A2 receptor"/>
    <property type="match status" value="1"/>
</dbReference>
<dbReference type="FunFam" id="3.10.100.10:FF:000050">
    <property type="entry name" value="Secretory phospholipase A2 receptor"/>
    <property type="match status" value="1"/>
</dbReference>
<dbReference type="FunFam" id="3.10.100.10:FF:000034">
    <property type="entry name" value="secretory phospholipase A2 receptor"/>
    <property type="match status" value="1"/>
</dbReference>
<dbReference type="FunFam" id="3.10.100.10:FF:000042">
    <property type="entry name" value="secretory phospholipase A2 receptor"/>
    <property type="match status" value="1"/>
</dbReference>
<dbReference type="Gene3D" id="2.80.10.50">
    <property type="match status" value="1"/>
</dbReference>
<dbReference type="Gene3D" id="2.10.10.10">
    <property type="entry name" value="Fibronectin, type II, collagen-binding"/>
    <property type="match status" value="1"/>
</dbReference>
<dbReference type="Gene3D" id="3.10.100.10">
    <property type="entry name" value="Mannose-Binding Protein A, subunit A"/>
    <property type="match status" value="8"/>
</dbReference>
<dbReference type="InterPro" id="IPR001304">
    <property type="entry name" value="C-type_lectin-like"/>
</dbReference>
<dbReference type="InterPro" id="IPR016186">
    <property type="entry name" value="C-type_lectin-like/link_sf"/>
</dbReference>
<dbReference type="InterPro" id="IPR050111">
    <property type="entry name" value="C-type_lectin/snaclec_domain"/>
</dbReference>
<dbReference type="InterPro" id="IPR018378">
    <property type="entry name" value="C-type_lectin_CS"/>
</dbReference>
<dbReference type="InterPro" id="IPR016187">
    <property type="entry name" value="CTDL_fold"/>
</dbReference>
<dbReference type="InterPro" id="IPR000562">
    <property type="entry name" value="FN_type2_dom"/>
</dbReference>
<dbReference type="InterPro" id="IPR036943">
    <property type="entry name" value="FN_type2_sf"/>
</dbReference>
<dbReference type="InterPro" id="IPR035992">
    <property type="entry name" value="Ricin_B-like_lectins"/>
</dbReference>
<dbReference type="InterPro" id="IPR000772">
    <property type="entry name" value="Ricin_B_lectin"/>
</dbReference>
<dbReference type="PANTHER" id="PTHR22803">
    <property type="entry name" value="MANNOSE, PHOSPHOLIPASE, LECTIN RECEPTOR RELATED"/>
    <property type="match status" value="1"/>
</dbReference>
<dbReference type="Pfam" id="PF24562">
    <property type="entry name" value="CysR_MRC2_N"/>
    <property type="match status" value="1"/>
</dbReference>
<dbReference type="Pfam" id="PF00040">
    <property type="entry name" value="fn2"/>
    <property type="match status" value="1"/>
</dbReference>
<dbReference type="Pfam" id="PF00059">
    <property type="entry name" value="Lectin_C"/>
    <property type="match status" value="8"/>
</dbReference>
<dbReference type="PRINTS" id="PR00013">
    <property type="entry name" value="FNTYPEII"/>
</dbReference>
<dbReference type="SMART" id="SM00034">
    <property type="entry name" value="CLECT"/>
    <property type="match status" value="8"/>
</dbReference>
<dbReference type="SMART" id="SM00059">
    <property type="entry name" value="FN2"/>
    <property type="match status" value="1"/>
</dbReference>
<dbReference type="SMART" id="SM00458">
    <property type="entry name" value="RICIN"/>
    <property type="match status" value="1"/>
</dbReference>
<dbReference type="SUPFAM" id="SSF56436">
    <property type="entry name" value="C-type lectin-like"/>
    <property type="match status" value="8"/>
</dbReference>
<dbReference type="SUPFAM" id="SSF50370">
    <property type="entry name" value="Ricin B-like lectins"/>
    <property type="match status" value="1"/>
</dbReference>
<dbReference type="PROSITE" id="PS00615">
    <property type="entry name" value="C_TYPE_LECTIN_1"/>
    <property type="match status" value="2"/>
</dbReference>
<dbReference type="PROSITE" id="PS50041">
    <property type="entry name" value="C_TYPE_LECTIN_2"/>
    <property type="match status" value="8"/>
</dbReference>
<dbReference type="PROSITE" id="PS00023">
    <property type="entry name" value="FN2_1"/>
    <property type="match status" value="1"/>
</dbReference>
<dbReference type="PROSITE" id="PS51092">
    <property type="entry name" value="FN2_2"/>
    <property type="match status" value="1"/>
</dbReference>
<dbReference type="PROSITE" id="PS50231">
    <property type="entry name" value="RICIN_B_LECTIN"/>
    <property type="match status" value="1"/>
</dbReference>
<accession>Q62028</accession>
<accession>A2AS64</accession>
<accession>B9EJ68</accession>
<accession>Q80ZL5</accession>
<reference key="1">
    <citation type="journal article" date="1994" name="Eur. J. Biochem.">
        <title>Structural comparison of phospholipase-A2-binding regions in phospholipase-A2 receptors from various mammals.</title>
        <authorList>
            <person name="Higashino K."/>
            <person name="Ishizaki J."/>
            <person name="Kishino J."/>
            <person name="Ohara O."/>
            <person name="Arita H."/>
        </authorList>
    </citation>
    <scope>NUCLEOTIDE SEQUENCE [MRNA] (ISOFORM 1)</scope>
    <scope>FUNCTION</scope>
    <scope>DOMAIN</scope>
    <scope>TISSUE SPECIFICITY</scope>
</reference>
<reference key="2">
    <citation type="journal article" date="2009" name="PLoS Biol.">
        <title>Lineage-specific biology revealed by a finished genome assembly of the mouse.</title>
        <authorList>
            <person name="Church D.M."/>
            <person name="Goodstadt L."/>
            <person name="Hillier L.W."/>
            <person name="Zody M.C."/>
            <person name="Goldstein S."/>
            <person name="She X."/>
            <person name="Bult C.J."/>
            <person name="Agarwala R."/>
            <person name="Cherry J.L."/>
            <person name="DiCuccio M."/>
            <person name="Hlavina W."/>
            <person name="Kapustin Y."/>
            <person name="Meric P."/>
            <person name="Maglott D."/>
            <person name="Birtle Z."/>
            <person name="Marques A.C."/>
            <person name="Graves T."/>
            <person name="Zhou S."/>
            <person name="Teague B."/>
            <person name="Potamousis K."/>
            <person name="Churas C."/>
            <person name="Place M."/>
            <person name="Herschleb J."/>
            <person name="Runnheim R."/>
            <person name="Forrest D."/>
            <person name="Amos-Landgraf J."/>
            <person name="Schwartz D.C."/>
            <person name="Cheng Z."/>
            <person name="Lindblad-Toh K."/>
            <person name="Eichler E.E."/>
            <person name="Ponting C.P."/>
        </authorList>
    </citation>
    <scope>NUCLEOTIDE SEQUENCE [LARGE SCALE GENOMIC DNA]</scope>
    <source>
        <strain>C57BL/6J</strain>
    </source>
</reference>
<reference key="3">
    <citation type="journal article" date="2004" name="Genome Res.">
        <title>The status, quality, and expansion of the NIH full-length cDNA project: the Mammalian Gene Collection (MGC).</title>
        <authorList>
            <consortium name="The MGC Project Team"/>
        </authorList>
    </citation>
    <scope>NUCLEOTIDE SEQUENCE [LARGE SCALE MRNA] (ISOFORMS 1 AND 2)</scope>
    <source>
        <tissue>Brain</tissue>
        <tissue>Eye</tissue>
    </source>
</reference>
<reference key="4">
    <citation type="journal article" date="1997" name="J. Biol. Chem.">
        <title>Resistance to endotoxic shock in phospholipase A2 receptor-deficient mice.</title>
        <authorList>
            <person name="Hanasaki K."/>
            <person name="Yokota Y."/>
            <person name="Ishizaki J."/>
            <person name="Itoh T."/>
            <person name="Arita H."/>
        </authorList>
    </citation>
    <scope>FUNCTION</scope>
    <scope>DISRUPTION PHENOTYPE</scope>
</reference>
<reference key="5">
    <citation type="journal article" date="1999" name="J. Biol. Chem.">
        <title>Both group IB and group IIA secreted phospholipases A2 are natural ligands of the mouse 180-kDa M-type receptor.</title>
        <authorList>
            <person name="Cupillard L."/>
            <person name="Mulherkar R."/>
            <person name="Gomez N."/>
            <person name="Kadam S."/>
            <person name="Valentin E."/>
            <person name="Lazdunski M."/>
            <person name="Lambeau G."/>
        </authorList>
    </citation>
    <scope>FUNCTION</scope>
    <scope>INTERACTION WITH PLA2G1B</scope>
</reference>
<reference key="6">
    <citation type="journal article" date="2000" name="Arch. Biochem. Biophys.">
        <title>Enhanced tissue expression and elevated circulating level of phospholipase A(2) receptor during murine endotoxic shock.</title>
        <authorList>
            <person name="Yokota Y."/>
            <person name="Ikeda M."/>
            <person name="Higashino K."/>
            <person name="Nakano K."/>
            <person name="Fujii N."/>
            <person name="Arita H."/>
            <person name="Hanasaki K."/>
        </authorList>
    </citation>
    <scope>TISSUE SPECIFICITY</scope>
    <scope>INDUCTION</scope>
</reference>
<reference key="7">
    <citation type="journal article" date="2000" name="Arch. Biochem. Biophys.">
        <title>Mouse group X secretory phospholipase A2 induces a potent release of arachidonic acid from spleen cells and acts as a ligand for the phospholipase A2 receptor.</title>
        <authorList>
            <person name="Morioka Y."/>
            <person name="Saiga A."/>
            <person name="Yokota Y."/>
            <person name="Suzuki N."/>
            <person name="Ikeda M."/>
            <person name="Ono T."/>
            <person name="Nakano K."/>
            <person name="Fujii N."/>
            <person name="Ishizaki J."/>
            <person name="Arita H."/>
            <person name="Hanasaki K."/>
        </authorList>
    </citation>
    <scope>FUNCTION</scope>
</reference>
<reference key="8">
    <citation type="journal article" date="2000" name="FEBS Lett.">
        <title>Identification of group X secretory phospholipase A(2) as a natural ligand for mouse phospholipase A(2) receptor.</title>
        <authorList>
            <person name="Yokota Y."/>
            <person name="Higashino K."/>
            <person name="Nakano K."/>
            <person name="Arita H."/>
            <person name="Hanasaki K."/>
        </authorList>
    </citation>
    <scope>FUNCTION</scope>
    <scope>INTERACTION WITH PLA2G10</scope>
</reference>
<reference key="9">
    <citation type="journal article" date="2000" name="J. Immunol.">
        <title>Secretory phospholipase A2 receptor-mediated activation of cytosolic phospholipase A2 in murine bone marrow-derived mast cells.</title>
        <authorList>
            <person name="Fonteh A.N."/>
            <person name="Atsumi G."/>
            <person name="LaPorte T."/>
            <person name="Chilton F.H."/>
        </authorList>
    </citation>
    <scope>FUNCTION</scope>
</reference>
<reference key="10">
    <citation type="journal article" date="2001" name="FASEB J.">
        <title>Pancreatic phospholipase A2 via its receptor regulates expression of key enzymes of phospholipid and sphingolipid metabolism.</title>
        <authorList>
            <person name="Mandal A.K."/>
            <person name="Zhang Z."/>
            <person name="Chou J.Y."/>
            <person name="Mukherjee A.B."/>
        </authorList>
    </citation>
    <scope>FUNCTION</scope>
</reference>
<reference key="11">
    <citation type="journal article" date="2001" name="FEBS Lett.">
        <title>Clearance of group X secretory phospholipase A(2) via mouse phospholipase A(2) receptor.</title>
        <authorList>
            <person name="Yokota Y."/>
            <person name="Notoya M."/>
            <person name="Higashino K."/>
            <person name="Ishimoto Y."/>
            <person name="Nakano K."/>
            <person name="Arita H."/>
            <person name="Hanasaki K."/>
        </authorList>
    </citation>
    <scope>FUNCTION</scope>
    <scope>INTERACTION WITH PLA2G10</scope>
</reference>
<reference key="12">
    <citation type="journal article" date="2002" name="Am. J. Physiol.">
        <title>Presence of the M-type sPLA(2) receptor on neutrophils and its role in elastase release and adhesion.</title>
        <authorList>
            <person name="Silliman C.C."/>
            <person name="Moore E.E."/>
            <person name="Zallen G."/>
            <person name="Gonzalez R."/>
            <person name="Johnson J.L."/>
            <person name="Elzi D.J."/>
            <person name="Meng X."/>
            <person name="Hanasaki K."/>
            <person name="Ishizaki J."/>
            <person name="Arita H."/>
            <person name="Ao L."/>
            <person name="England K.M."/>
            <person name="Banerjee A."/>
        </authorList>
    </citation>
    <scope>FUNCTION</scope>
    <scope>TISSUE SPECIFICITY</scope>
</reference>
<reference key="13">
    <citation type="journal article" date="2002" name="J. Biol. Chem.">
        <title>Identification of a soluble form phospholipase A2 receptor as a circulating endogenous inhibitor for secretory phospholipase A2.</title>
        <authorList>
            <person name="Higashino Ki K."/>
            <person name="Yokota Y."/>
            <person name="Ono T."/>
            <person name="Kamitani S."/>
            <person name="Arita H."/>
            <person name="Hanasaki K."/>
        </authorList>
    </citation>
    <scope>FUNCTION</scope>
    <scope>SUBCELLULAR LOCATION</scope>
    <scope>POSSIBLE PROTEOLYTIC PROCESSING</scope>
</reference>
<reference key="14">
    <citation type="journal article" date="2006" name="Biochimie">
        <title>Binding to the high-affinity M-type receptor for secreted phospholipases A(2) is not obligatory for the presynaptic neurotoxicity of ammodytoxin A.</title>
        <authorList>
            <person name="Prijatelj P."/>
            <person name="Vardjan N."/>
            <person name="Rowan E.G."/>
            <person name="Krizaj I."/>
            <person name="Pungercar J."/>
        </authorList>
    </citation>
    <scope>FUNCTION</scope>
</reference>
<reference key="15">
    <citation type="journal article" date="2007" name="Biochemistry">
        <title>Recombinant production and properties of binding of the full set of mouse secreted phospholipases A2 to the mouse M-type receptor.</title>
        <authorList>
            <person name="Rouault M."/>
            <person name="Le Calvez C."/>
            <person name="Boilard E."/>
            <person name="Surrel F."/>
            <person name="Singer A."/>
            <person name="Ghomashchi F."/>
            <person name="Bezzine S."/>
            <person name="Scarzello S."/>
            <person name="Bollinger J."/>
            <person name="Gelb M.H."/>
            <person name="Lambeau G."/>
        </authorList>
    </citation>
    <scope>FUNCTION</scope>
</reference>
<reference key="16">
    <citation type="journal article" date="2010" name="Cell">
        <title>A tissue-specific atlas of mouse protein phosphorylation and expression.</title>
        <authorList>
            <person name="Huttlin E.L."/>
            <person name="Jedrychowski M.P."/>
            <person name="Elias J.E."/>
            <person name="Goswami T."/>
            <person name="Rad R."/>
            <person name="Beausoleil S.A."/>
            <person name="Villen J."/>
            <person name="Haas W."/>
            <person name="Sowa M.E."/>
            <person name="Gygi S.P."/>
        </authorList>
    </citation>
    <scope>IDENTIFICATION BY MASS SPECTROMETRY [LARGE SCALE ANALYSIS]</scope>
    <source>
        <tissue>Kidney</tissue>
        <tissue>Lung</tissue>
        <tissue>Spleen</tissue>
        <tissue>Testis</tissue>
    </source>
</reference>
<feature type="signal peptide" evidence="1">
    <location>
        <begin position="1"/>
        <end position="26"/>
    </location>
</feature>
<feature type="chain" id="PRO_5000139804" description="Secretory phospholipase A2 receptor">
    <location>
        <begin position="27"/>
        <end position="1487"/>
    </location>
</feature>
<feature type="chain" id="PRO_0000311251" description="Soluble secretory phospholipase A2 receptor" evidence="22">
    <location>
        <begin position="27"/>
        <end status="unknown"/>
    </location>
</feature>
<feature type="topological domain" description="Extracellular" evidence="3">
    <location>
        <begin position="27"/>
        <end position="1396"/>
    </location>
</feature>
<feature type="transmembrane region" description="Helical" evidence="3">
    <location>
        <begin position="1397"/>
        <end position="1417"/>
    </location>
</feature>
<feature type="topological domain" description="Cytoplasmic" evidence="3">
    <location>
        <begin position="1418"/>
        <end position="1487"/>
    </location>
</feature>
<feature type="domain" description="Ricin B-type lectin" evidence="5">
    <location>
        <begin position="42"/>
        <end position="165"/>
    </location>
</feature>
<feature type="domain" description="Fibronectin type-II" evidence="6">
    <location>
        <begin position="176"/>
        <end position="224"/>
    </location>
</feature>
<feature type="domain" description="C-type lectin 1" evidence="4">
    <location>
        <begin position="241"/>
        <end position="357"/>
    </location>
</feature>
<feature type="domain" description="C-type lectin 2" evidence="4">
    <location>
        <begin position="387"/>
        <end position="504"/>
    </location>
</feature>
<feature type="domain" description="C-type lectin 3" evidence="4">
    <location>
        <begin position="524"/>
        <end position="643"/>
    </location>
</feature>
<feature type="domain" description="C-type lectin 4" evidence="4">
    <location>
        <begin position="673"/>
        <end position="797"/>
    </location>
</feature>
<feature type="domain" description="C-type lectin 5" evidence="4">
    <location>
        <begin position="819"/>
        <end position="938"/>
    </location>
</feature>
<feature type="domain" description="C-type lectin 6" evidence="4">
    <location>
        <begin position="964"/>
        <end position="1095"/>
    </location>
</feature>
<feature type="domain" description="C-type lectin 7" evidence="4">
    <location>
        <begin position="1120"/>
        <end position="1231"/>
    </location>
</feature>
<feature type="domain" description="C-type lectin 8" evidence="4">
    <location>
        <begin position="1256"/>
        <end position="1377"/>
    </location>
</feature>
<feature type="region of interest" description="Disordered" evidence="7">
    <location>
        <begin position="1463"/>
        <end position="1487"/>
    </location>
</feature>
<feature type="short sequence motif" description="Endocytosis signal">
    <location>
        <begin position="1435"/>
        <end position="1441"/>
    </location>
</feature>
<feature type="compositionally biased region" description="Basic and acidic residues" evidence="7">
    <location>
        <begin position="1463"/>
        <end position="1475"/>
    </location>
</feature>
<feature type="glycosylation site" description="N-linked (GlcNAc...) asparagine" evidence="3">
    <location>
        <position position="97"/>
    </location>
</feature>
<feature type="glycosylation site" description="N-linked (GlcNAc...) asparagine" evidence="3">
    <location>
        <position position="239"/>
    </location>
</feature>
<feature type="glycosylation site" description="N-linked (GlcNAc...) asparagine" evidence="3">
    <location>
        <position position="928"/>
    </location>
</feature>
<feature type="glycosylation site" description="N-linked (GlcNAc...) asparagine" evidence="3">
    <location>
        <position position="1107"/>
    </location>
</feature>
<feature type="glycosylation site" description="N-linked (GlcNAc...) asparagine" evidence="3">
    <location>
        <position position="1122"/>
    </location>
</feature>
<feature type="glycosylation site" description="N-linked (GlcNAc...) asparagine" evidence="3">
    <location>
        <position position="1131"/>
    </location>
</feature>
<feature type="disulfide bond" evidence="1">
    <location>
        <begin position="55"/>
        <end position="68"/>
    </location>
</feature>
<feature type="disulfide bond" evidence="1">
    <location>
        <begin position="93"/>
        <end position="110"/>
    </location>
</feature>
<feature type="disulfide bond" evidence="1">
    <location>
        <begin position="181"/>
        <end position="207"/>
    </location>
</feature>
<feature type="disulfide bond" evidence="1">
    <location>
        <begin position="195"/>
        <end position="222"/>
    </location>
</feature>
<feature type="disulfide bond" evidence="1">
    <location>
        <begin position="263"/>
        <end position="356"/>
    </location>
</feature>
<feature type="disulfide bond" evidence="1">
    <location>
        <begin position="333"/>
        <end position="348"/>
    </location>
</feature>
<feature type="disulfide bond" evidence="1">
    <location>
        <begin position="408"/>
        <end position="503"/>
    </location>
</feature>
<feature type="disulfide bond" evidence="1">
    <location>
        <begin position="480"/>
        <end position="495"/>
    </location>
</feature>
<feature type="disulfide bond" evidence="1">
    <location>
        <begin position="617"/>
        <end position="634"/>
    </location>
</feature>
<feature type="disulfide bond" evidence="1">
    <location>
        <begin position="699"/>
        <end position="796"/>
    </location>
</feature>
<feature type="disulfide bond" evidence="1">
    <location>
        <begin position="774"/>
        <end position="788"/>
    </location>
</feature>
<feature type="disulfide bond" evidence="1">
    <location>
        <begin position="840"/>
        <end position="937"/>
    </location>
</feature>
<feature type="disulfide bond" evidence="1">
    <location>
        <begin position="914"/>
        <end position="929"/>
    </location>
</feature>
<feature type="disulfide bond" evidence="1">
    <location>
        <begin position="1066"/>
        <end position="1086"/>
    </location>
</feature>
<feature type="disulfide bond" evidence="1">
    <location>
        <begin position="1208"/>
        <end position="1222"/>
    </location>
</feature>
<feature type="disulfide bond" evidence="1">
    <location>
        <begin position="1279"/>
        <end position="1376"/>
    </location>
</feature>
<feature type="disulfide bond" evidence="1">
    <location>
        <begin position="1353"/>
        <end position="1368"/>
    </location>
</feature>
<feature type="splice variant" id="VSP_029495" description="In isoform 2." evidence="21">
    <original>VFHSEKVLMK</original>
    <variation>DTGKAVLDWI</variation>
    <location>
        <begin position="680"/>
        <end position="689"/>
    </location>
</feature>
<feature type="splice variant" id="VSP_029496" description="In isoform 2." evidence="21">
    <location>
        <begin position="690"/>
        <end position="1487"/>
    </location>
</feature>
<sequence>MVQWLAMLQLLWLQQLLLLGIHQGIAQDLTHIQEPSLEWRDKGIFIIQSESLKTCIQAGKSVLTLENCKQPNEHMLWKWVSDDHLFNVGGSGCLGLNISALEQPLKLYECDSTLISLRWHCDRKMIEGPLQYKVQVKSDNTVVARKQIHRWIAYTSSGGDICEHPSRDLYTLKGNAHGMPCVFPFQFKGHWHHDCIREGQKEHLLWCATTSRYEEDEKWGFCPDPTSMKVFCDATWQRNGSSRICYQFNLLSSLSWNQAHSSCLMQGGALLSIADEDEEDFIRKHLSKVVKEVWIGLNQLDEKAGWQWSDGTPLSYLNWSQEITPGPFVEHHCGTLEVVSAAWRSRDCESTLPYICKRDLNHTAQGILEKDSWKYHATHCDPDWTPFNRKCYKLKKDRKSWLGALHSCQSNDSVLMDVASLAEVEFLVSLLRDENASETWIGLSSNKIPVSFEWSSGSSVIFTNWYPLEPRILPNRRQLCVSAEESDGRWKVKDCKERLFYICKKAGQVPADEQSGCPAGWERHGRFCYKIDTVLRSFEEASSGYYCSPALLTITSRFEQAFITSLISSVAEKDSYFWIALQDQNNTGEYTWKTVGQREPVQYTYWNTRQPSNRGGCVVVRGGSSLGRWEVKDCSDFKAMSLCKTPVKIWEKTELEERWPFHPCYMDWESATGLASCFKVFHSEKVLMKRSWREAEAFCEEFGAHLASFAHIEEENFVNELLHSKFNWTQERQFWIGFNRRNPLNAGSWAWSDGSPVVSSFLDNAYFEEDAKNCAVYKANKTLLPSNCASKHEWICRIPRDVRPKFPDWYQYDAPWLFYQNAEYLFHTHPAEWATFEFVCGWLRSDFLTIYSAQEQEFIHSKIKGLTKYGVKWWIGLEEGGARDQIQWSNGSPVIFQNWDKGREERVDSQRKRCVFISSITGLWGTENCSVPLPSICKRVKIWVIEKEKPPTQPGTCPKGWLYFNYKCFLVTIPKDPRELKTWTGAQEFCVAKGGTLVSIKSELEQAFITMNLFGQTTNVWIGLQSTNHEKWVNGKPLVYSNWSPSDIINIPSYNTTEFQKHIPLCALMSSNPNFHFTGKWYFDDCGKEGYGFVCEKMQDTLEHHVNVSDTSAIPSTLEYGNRTYKIIRGNMTWYAAGKSCRMHRAELASIPDAFHQAFLTVLLSRLGHTHWIGLSTTDNGQTFDWSDGTKSPFTYWKDEESAFLGDCAFADTNGRWHSTACESFLQGAICHVVTETKAFEHPGLCSETSVPWIKFKGNCYSFSTVLDSRSFEDAHEFCKSEGSNLLAIRDAAENSFLLEELLAFGSSVQMVWLNAQFDNNNKTLRWFDGTPTEQSNWGLRKPDMDHLKPHPCVVLRIPEGIWHFTPCEDKKGFICKMEAGIPAVTAQPEKGLSHSIVPVTVTLTLIIALGIFMLCFWIYKQKSDIFQRLTGSRGSYYPTLNFSTAHLEENILISDLEKNTNDEEVRDAPATESKRGHKGRPICISP</sequence>
<keyword id="KW-0025">Alternative splicing</keyword>
<keyword id="KW-1003">Cell membrane</keyword>
<keyword id="KW-1015">Disulfide bond</keyword>
<keyword id="KW-0254">Endocytosis</keyword>
<keyword id="KW-0325">Glycoprotein</keyword>
<keyword id="KW-0430">Lectin</keyword>
<keyword id="KW-0472">Membrane</keyword>
<keyword id="KW-0675">Receptor</keyword>
<keyword id="KW-1185">Reference proteome</keyword>
<keyword id="KW-0677">Repeat</keyword>
<keyword id="KW-0964">Secreted</keyword>
<keyword id="KW-0732">Signal</keyword>
<keyword id="KW-0812">Transmembrane</keyword>
<keyword id="KW-1133">Transmembrane helix</keyword>
<name>PLA2R_MOUSE</name>
<proteinExistence type="evidence at protein level"/>
<protein>
    <recommendedName>
        <fullName>Secretory phospholipase A2 receptor</fullName>
        <shortName>PLA2-R</shortName>
        <shortName>PLA2R</shortName>
    </recommendedName>
    <alternativeName>
        <fullName>180 kDa secretory phospholipase A2 receptor</fullName>
    </alternativeName>
    <alternativeName>
        <fullName>M-type receptor</fullName>
    </alternativeName>
    <component>
        <recommendedName>
            <fullName>Soluble secretory phospholipase A2 receptor</fullName>
            <shortName>Soluble PLA2-R</shortName>
            <shortName>Soluble PLA2R</shortName>
        </recommendedName>
    </component>
</protein>
<comment type="function">
    <text evidence="2 8 10 11 12 13 14 15 16 17 18 19 20">Receptor for secretory phospholipase A2 (sPLA2). Acts as a receptor for phospholipases sPLA2-IB/PLA2G1B, sPLA2-X/PLA2G10 and, with lower affinity, sPLA2-IIA/PLA2G2A. Also able to bind to snake PA2-like toxins. Although its precise function remains unclear, binding of sPLA2 to its receptor participates in both positive and negative regulation of sPLA2 functions as well as clearance of sPLA2. Binding of sPLA2-IB/PLA2G1B induces various effects depending on the cell type, such as activation of the mitogen-activated protein kinase (MAPK) cascade to induce cell proliferation, the production of lipid mediators, selective release of arachidonic acid in bone marrow-derived mast cells. In neutrophils, binding of sPLA2-IB/PLA2G1B can activate p38 MAPK to stimulate elastase release and cell adhesion. May be involved in responses in pro-inflammatory cytokine productions during endotoxic shock. Also has endocytic properties and rapidly internalizes sPLA2 ligands, which is particularly important for the clearance of extracellular sPLA2s to protect their potent enzymatic activities. The soluble secretory phospholipase A2 receptor form is circulating and acts as a negative regulator of sPLA2 functions by blocking the biological functions of sPLA2-IB/PLA2G1B and sPLA2-X/PLA2G10. In podocytes, binding of sPLA2-IB/PLA2G1B can regulate podocyte survival and glomerular homeostasis.</text>
</comment>
<comment type="subunit">
    <text evidence="8 10 14">Interacts with sPLA2-IB/PLA2G1B; this interaction mediates intracellular signaling as well as clearance of extracellular sPLA2-IB/PLA2G1B via endocytotic pathway (PubMed:10066760). Interacts with sPLA2-X/PLA2G10; this interaction mediates sPLA2-X/PLA2G10 clearance and inactivation (PubMed:10922494, PubMed:11741598).</text>
</comment>
<comment type="subcellular location">
    <subcellularLocation>
        <location evidence="15">Cell membrane</location>
        <topology evidence="15">Single-pass type I membrane protein</topology>
    </subcellularLocation>
</comment>
<comment type="subcellular location">
    <molecule>Soluble secretory phospholipase A2 receptor</molecule>
    <subcellularLocation>
        <location>Secreted</location>
    </subcellularLocation>
</comment>
<comment type="alternative products">
    <event type="alternative splicing"/>
    <isoform>
        <id>Q62028-1</id>
        <name>1</name>
        <sequence type="displayed"/>
    </isoform>
    <isoform>
        <id>Q62028-2</id>
        <name>2</name>
        <sequence type="described" ref="VSP_029495 VSP_029496"/>
    </isoform>
</comment>
<comment type="tissue specificity">
    <text evidence="9 16 19">Widely expressed. Present in type II alveolar epithelial cells and a subset of splenic lymphocytes. Present at the surface of polymorphonuclear neutrophils (at protein level).</text>
</comment>
<comment type="induction">
    <text evidence="9">Following exposure to endotoxin (at protein level).</text>
</comment>
<comment type="domain">
    <text evidence="19">C-type lectin domains 3-5 mediate the interaction with phospholipase PLA2G1B.</text>
</comment>
<comment type="domain">
    <text evidence="1">The endocytosis signal probably mediates endocytosis via clathrin-coated pits.</text>
</comment>
<comment type="PTM">
    <text>The secretory phospholipase A2 receptor form may be produced by the action of metalloproteinases. It contains all extracellular domains and only lacks transmembrane and cytosolic regions. It is however unclear whether this form is produced by proteolytic cleavage as suggested by some experiments reported by PubMed:11830583, or by alternative splicing.</text>
</comment>
<comment type="disruption phenotype">
    <text evidence="20">Mice are viable, fertile and without evident histopathological abnormalities. After challenge with bacterial lipopolysaccharide (LPS), they exhibit longer survival than wild-type mice. They are also resistant to lethal effects of exogenous sPLA2-IB/PLA2G1B after sensitization with sublethal dose of LPS, suggesting a potential role in the progression of endotoxic shock.</text>
</comment>
<comment type="sequence caution" evidence="22">
    <conflict type="erroneous initiation">
        <sequence resource="EMBL-CDS" id="CAM22305"/>
    </conflict>
</comment>
<comment type="sequence caution" evidence="22">
    <conflict type="erroneous initiation">
        <sequence resource="EMBL-CDS" id="CAM23630"/>
    </conflict>
</comment>
<comment type="online information" name="Functional Glycomics Gateway - Glycan Binding">
    <link uri="http://www.functionalglycomics.org/glycomics/GBPServlet?&amp;operationType=view&amp;cbpId=cbp_mou_Ctlect_356"/>
    <text>Phospholipase A2 receptor</text>
</comment>
<gene>
    <name type="primary">Pla2r1</name>
    <name type="synonym">Pla2g1br</name>
</gene>